<gene>
    <name type="primary">ipaH9.8</name>
    <name type="ordered locus">SFxv_5076</name>
</gene>
<sequence length="545" mass="62000">MLPINNNFSLPQNSFYNTISGTYADYFSAWDKWEKQALPGEERDEAVSRLKECLINNSDELRLDRLNLSSLPDNLPAQITLLNVSYNQLTNLPELPVTLKKLYSASNKLSELPVLPPALESLQVQHNELENLPALPDSLLTMNISYNEIVSLPSLPQALKNLRATRNFLTELPAFSEGNNPVVREYFFDRNQISHIPESILNLRNECSIHISDNPLSSHALQALQRLTSSPDYHGPRIYFSMSDGQQNTLHRPLADAVTAWFPENKQSDVSQIWHAFEHEEHANTFSAFLDRLSDTVSARNTSGFREQVAAWLEKLSASAELRQQSFAVAADATESCEDRVALTWNNLRKTLLVHQASEGLFDNDTGALLSLGREMFRLEILEDIARDKVRTLHFVDEIEVYLAFQTMLAEKLQLSTAVKEMRFYGVSGVTANDLRTAEAMVRSREENEFTDWFSLWGPWHAVLKRTEADRWAQAEEQKYEMLENEYPQRVADRLKASGLSGDADAEREAGAQVMRETEQQIYRQLTDEVLALRLSENGSQLHHS</sequence>
<proteinExistence type="inferred from homology"/>
<organism>
    <name type="scientific">Shigella flexneri serotype X (strain 2002017)</name>
    <dbReference type="NCBI Taxonomy" id="591020"/>
    <lineage>
        <taxon>Bacteria</taxon>
        <taxon>Pseudomonadati</taxon>
        <taxon>Pseudomonadota</taxon>
        <taxon>Gammaproteobacteria</taxon>
        <taxon>Enterobacterales</taxon>
        <taxon>Enterobacteriaceae</taxon>
        <taxon>Shigella</taxon>
    </lineage>
</organism>
<geneLocation type="plasmid">
    <name>pSFxv_1</name>
</geneLocation>
<accession>D2AJU0</accession>
<evidence type="ECO:0000250" key="1"/>
<evidence type="ECO:0000250" key="2">
    <source>
        <dbReference type="UniProtKB" id="P0CE12"/>
    </source>
</evidence>
<evidence type="ECO:0000250" key="3">
    <source>
        <dbReference type="UniProtKB" id="Q8VSC3"/>
    </source>
</evidence>
<evidence type="ECO:0000255" key="4">
    <source>
        <dbReference type="PROSITE-ProRule" id="PRU01398"/>
    </source>
</evidence>
<evidence type="ECO:0000305" key="5"/>
<feature type="chain" id="PRO_0000395759" description="E3 ubiquitin-protein ligase ipaH9.8">
    <location>
        <begin position="1"/>
        <end position="545"/>
    </location>
</feature>
<feature type="repeat" description="LRR 1">
    <location>
        <begin position="57"/>
        <end position="77"/>
    </location>
</feature>
<feature type="repeat" description="LRR 2">
    <location>
        <begin position="78"/>
        <end position="99"/>
    </location>
</feature>
<feature type="repeat" description="LRR 3">
    <location>
        <begin position="100"/>
        <end position="117"/>
    </location>
</feature>
<feature type="repeat" description="LRR 4">
    <location>
        <begin position="118"/>
        <end position="139"/>
    </location>
</feature>
<feature type="repeat" description="LRR 5">
    <location>
        <begin position="140"/>
        <end position="157"/>
    </location>
</feature>
<feature type="repeat" description="LRR 6">
    <location>
        <begin position="158"/>
        <end position="179"/>
    </location>
</feature>
<feature type="repeat" description="LRR 7">
    <location>
        <begin position="182"/>
        <end position="203"/>
    </location>
</feature>
<feature type="repeat" description="LRR 8">
    <location>
        <begin position="205"/>
        <end position="228"/>
    </location>
</feature>
<feature type="domain" description="NEL" evidence="4">
    <location>
        <begin position="253"/>
        <end position="545"/>
    </location>
</feature>
<feature type="region of interest" description="Interaction with target proteins" evidence="2">
    <location>
        <begin position="1"/>
        <end position="242"/>
    </location>
</feature>
<feature type="region of interest" description="Linker" evidence="2">
    <location>
        <begin position="243"/>
        <end position="250"/>
    </location>
</feature>
<feature type="region of interest" description="E3 ubiquitin-protein ligase catalytic domain" evidence="2">
    <location>
        <begin position="251"/>
        <end position="545"/>
    </location>
</feature>
<feature type="active site" description="Glycyl thioester intermediate" evidence="4">
    <location>
        <position position="337"/>
    </location>
</feature>
<keyword id="KW-1035">Host cytoplasm</keyword>
<keyword id="KW-1048">Host nucleus</keyword>
<keyword id="KW-0433">Leucine-rich repeat</keyword>
<keyword id="KW-0614">Plasmid</keyword>
<keyword id="KW-0677">Repeat</keyword>
<keyword id="KW-0964">Secreted</keyword>
<keyword id="KW-0808">Transferase</keyword>
<keyword id="KW-0832">Ubl conjugation</keyword>
<keyword id="KW-0833">Ubl conjugation pathway</keyword>
<keyword id="KW-0843">Virulence</keyword>
<dbReference type="EC" id="2.3.2.27" evidence="3"/>
<dbReference type="EMBL" id="CP001384">
    <property type="protein sequence ID" value="ADA76971.1"/>
    <property type="molecule type" value="Genomic_DNA"/>
</dbReference>
<dbReference type="RefSeq" id="WP_000936806.1">
    <property type="nucleotide sequence ID" value="NC_017319.1"/>
</dbReference>
<dbReference type="SMR" id="D2AJU0"/>
<dbReference type="KEGG" id="sfe:SFxv_5076"/>
<dbReference type="PATRIC" id="fig|591020.3.peg.5448"/>
<dbReference type="HOGENOM" id="CLU_018533_2_0_6"/>
<dbReference type="GO" id="GO:0005576">
    <property type="term" value="C:extracellular region"/>
    <property type="evidence" value="ECO:0000250"/>
    <property type="project" value="UniProtKB"/>
</dbReference>
<dbReference type="GO" id="GO:0044164">
    <property type="term" value="C:host cell cytosol"/>
    <property type="evidence" value="ECO:0000250"/>
    <property type="project" value="UniProtKB"/>
</dbReference>
<dbReference type="GO" id="GO:0042025">
    <property type="term" value="C:host cell nucleus"/>
    <property type="evidence" value="ECO:0000250"/>
    <property type="project" value="UniProtKB"/>
</dbReference>
<dbReference type="GO" id="GO:0061630">
    <property type="term" value="F:ubiquitin protein ligase activity"/>
    <property type="evidence" value="ECO:0000250"/>
    <property type="project" value="UniProtKB"/>
</dbReference>
<dbReference type="GO" id="GO:0004842">
    <property type="term" value="F:ubiquitin-protein transferase activity"/>
    <property type="evidence" value="ECO:0000250"/>
    <property type="project" value="UniProtKB"/>
</dbReference>
<dbReference type="GO" id="GO:0044314">
    <property type="term" value="P:protein K27-linked ubiquitination"/>
    <property type="evidence" value="ECO:0000250"/>
    <property type="project" value="UniProtKB"/>
</dbReference>
<dbReference type="GO" id="GO:0070936">
    <property type="term" value="P:protein K48-linked ubiquitination"/>
    <property type="evidence" value="ECO:0000250"/>
    <property type="project" value="UniProtKB"/>
</dbReference>
<dbReference type="GO" id="GO:0052170">
    <property type="term" value="P:symbiont-mediated suppression of host innate immune response"/>
    <property type="evidence" value="ECO:0000250"/>
    <property type="project" value="UniProtKB"/>
</dbReference>
<dbReference type="FunFam" id="1.20.58.90:FF:000007">
    <property type="entry name" value="E3 ubiquitin-protein ligase ipaH9.8"/>
    <property type="match status" value="1"/>
</dbReference>
<dbReference type="FunFam" id="1.20.1270.130:FF:000001">
    <property type="entry name" value="Invasion plasmid antigen IpaH"/>
    <property type="match status" value="1"/>
</dbReference>
<dbReference type="FunFam" id="1.20.58.360:FF:000001">
    <property type="entry name" value="Probable E3 ubiquitin-protein ligase ipaH7.8"/>
    <property type="match status" value="1"/>
</dbReference>
<dbReference type="Gene3D" id="1.20.58.90">
    <property type="match status" value="1"/>
</dbReference>
<dbReference type="Gene3D" id="3.80.10.10">
    <property type="entry name" value="Ribonuclease Inhibitor"/>
    <property type="match status" value="1"/>
</dbReference>
<dbReference type="Gene3D" id="1.20.58.360">
    <property type="entry name" value="Shigella T3SS effector IpaH defines"/>
    <property type="match status" value="1"/>
</dbReference>
<dbReference type="Gene3D" id="1.20.1270.130">
    <property type="entry name" value="Shigella T3SS effector IpaH domain"/>
    <property type="match status" value="1"/>
</dbReference>
<dbReference type="InterPro" id="IPR051071">
    <property type="entry name" value="LRR-bact_E3_ubiq_ligases"/>
</dbReference>
<dbReference type="InterPro" id="IPR032675">
    <property type="entry name" value="LRR_dom_sf"/>
</dbReference>
<dbReference type="InterPro" id="IPR032674">
    <property type="entry name" value="LRR_E3_ligase_N"/>
</dbReference>
<dbReference type="InterPro" id="IPR029487">
    <property type="entry name" value="NEL_dom"/>
</dbReference>
<dbReference type="NCBIfam" id="NF046045">
    <property type="entry name" value="IpaH_Shig"/>
    <property type="match status" value="1"/>
</dbReference>
<dbReference type="PANTHER" id="PTHR47114">
    <property type="match status" value="1"/>
</dbReference>
<dbReference type="PANTHER" id="PTHR47114:SF2">
    <property type="entry name" value="OLIGODENDROCYTE-MYELIN GLYCOPROTEIN"/>
    <property type="match status" value="1"/>
</dbReference>
<dbReference type="Pfam" id="PF12468">
    <property type="entry name" value="LRR_TTSS"/>
    <property type="match status" value="1"/>
</dbReference>
<dbReference type="Pfam" id="PF14496">
    <property type="entry name" value="NEL"/>
    <property type="match status" value="1"/>
</dbReference>
<dbReference type="SMART" id="SM00364">
    <property type="entry name" value="LRR_BAC"/>
    <property type="match status" value="5"/>
</dbReference>
<dbReference type="SUPFAM" id="SSF52058">
    <property type="entry name" value="L domain-like"/>
    <property type="match status" value="1"/>
</dbReference>
<dbReference type="PROSITE" id="PS52053">
    <property type="entry name" value="NEL"/>
    <property type="match status" value="1"/>
</dbReference>
<protein>
    <recommendedName>
        <fullName>E3 ubiquitin-protein ligase ipaH9.8</fullName>
        <ecNumber evidence="3">2.3.2.27</ecNumber>
    </recommendedName>
    <alternativeName>
        <fullName>Invasion plasmid antigen ipaH9.8</fullName>
    </alternativeName>
</protein>
<comment type="function">
    <text evidence="3">Effector E3 ubiquitin ligase that interferes with host's ubiquitination pathway and modulates the acute inflammatory responses, thus facilitating bacterial colonization within the host cell. Interacts with IKBKG (NEMO) and TNIP1 (ABIN-1), a ubiquitin-binding adapter protein, which results in TNIP1-dependent 'Lys-27'-linked polyubiquitination of IKBKG. Consequently, polyubiquitinated IKBKG undergoes proteasome-dependent degradation, which perturbs NF-kappa-B activation during bacterial infection. Mediates polyubiquitination of host U2AF1, leading to its proteasomal degradation. Catalyzes 'Lys-48'-linked polyubiquitination and subsequent degradation of a subset of host guanylate-binding proteins (GBP1, GBP2, GBP4 and GBP6), thereby suppressing host cell defense. In contrast, host GBP3 and GBP7 are not ubiquitinated by IpaH9.8. Uses UBE2D2 (UBCH5B) as an E2 ubiquitin-conjugating enzyme.</text>
</comment>
<comment type="catalytic activity">
    <reaction evidence="3">
        <text>S-ubiquitinyl-[E2 ubiquitin-conjugating enzyme]-L-cysteine + [acceptor protein]-L-lysine = [E2 ubiquitin-conjugating enzyme]-L-cysteine + N(6)-ubiquitinyl-[acceptor protein]-L-lysine.</text>
        <dbReference type="EC" id="2.3.2.27"/>
    </reaction>
</comment>
<comment type="activity regulation">
    <text evidence="3">Exists in an autoinhibited state in the absence of substrate protein, due to interactions of the leucine-rich repeats with NEL domain. Is activated upon binding to a substrate protein.</text>
</comment>
<comment type="subunit">
    <text evidence="3">Also interacts with human and mouse U2AF1 (U2AF35).</text>
</comment>
<comment type="subcellular location">
    <subcellularLocation>
        <location evidence="3">Secreted</location>
    </subcellularLocation>
    <subcellularLocation>
        <location evidence="3">Host cytoplasm</location>
    </subcellularLocation>
    <subcellularLocation>
        <location evidence="3">Host nucleus</location>
    </subcellularLocation>
    <text evidence="3">Secreted via Mxi-Spa type III secretion system (T3SS), and delivered into the host cytoplasm. Transported into the host nucleus. This transport is independent of cytosolic factors, but dependent on temperature and partly on ATP/GTP.</text>
</comment>
<comment type="domain">
    <text evidence="3">The LRR (leucine-rich repeat) repeats are involved in substrate recognition with target proteins.</text>
</comment>
<comment type="PTM">
    <text evidence="1">Ubiquitinated in the presence of host E1 ubiquitin-activating enzyme, E2 ubiquitin-conjugating enzyme and ubiquitin.</text>
</comment>
<comment type="similarity">
    <text evidence="4 5">Belongs to the LRR-containing bacterial E3 ligase family.</text>
</comment>
<reference key="1">
    <citation type="journal article" date="2010" name="J. Clin. Microbiol.">
        <title>Emergence of a new multidrug-resistant serotype X variant in an epidemic clone of Shigella flexneri.</title>
        <authorList>
            <person name="Ye C."/>
            <person name="Lan R."/>
            <person name="Xia S."/>
            <person name="Zhang J."/>
            <person name="Sun Q."/>
            <person name="Zhang S."/>
            <person name="Jing H."/>
            <person name="Wang L."/>
            <person name="Li Z."/>
            <person name="Zhou Z."/>
            <person name="Zhao A."/>
            <person name="Cui Z."/>
            <person name="Cao J."/>
            <person name="Jin D."/>
            <person name="Huang L."/>
            <person name="Wang Y."/>
            <person name="Luo X."/>
            <person name="Bai X."/>
            <person name="Wang Y."/>
            <person name="Wang P."/>
            <person name="Xu Q."/>
            <person name="Xu J."/>
        </authorList>
    </citation>
    <scope>NUCLEOTIDE SEQUENCE [LARGE SCALE GENOMIC DNA]</scope>
    <source>
        <strain>2002017</strain>
    </source>
</reference>
<name>IPA9_SHIF2</name>